<sequence>MISKIDKNKVRLKRHARVRTNLSGTAEKPRLNVYRSNKHIYAQIIDDNKGVTLAQASSKDSDIATTATKVELATKVGEAIAKKAADKGIKEIVFDRGGYLYHGRVKALAEAARESGLEF</sequence>
<accession>A6U3V9</accession>
<feature type="chain" id="PRO_1000086690" description="Large ribosomal subunit protein uL18">
    <location>
        <begin position="1"/>
        <end position="119"/>
    </location>
</feature>
<gene>
    <name evidence="1" type="primary">rplR</name>
    <name type="ordered locus">SaurJH1_2302</name>
</gene>
<protein>
    <recommendedName>
        <fullName evidence="1">Large ribosomal subunit protein uL18</fullName>
    </recommendedName>
    <alternativeName>
        <fullName evidence="2">50S ribosomal protein L18</fullName>
    </alternativeName>
</protein>
<reference key="1">
    <citation type="submission" date="2007-06" db="EMBL/GenBank/DDBJ databases">
        <title>Complete sequence of chromosome of Staphylococcus aureus subsp. aureus JH1.</title>
        <authorList>
            <consortium name="US DOE Joint Genome Institute"/>
            <person name="Copeland A."/>
            <person name="Lucas S."/>
            <person name="Lapidus A."/>
            <person name="Barry K."/>
            <person name="Detter J.C."/>
            <person name="Glavina del Rio T."/>
            <person name="Hammon N."/>
            <person name="Israni S."/>
            <person name="Dalin E."/>
            <person name="Tice H."/>
            <person name="Pitluck S."/>
            <person name="Chain P."/>
            <person name="Malfatti S."/>
            <person name="Shin M."/>
            <person name="Vergez L."/>
            <person name="Schmutz J."/>
            <person name="Larimer F."/>
            <person name="Land M."/>
            <person name="Hauser L."/>
            <person name="Kyrpides N."/>
            <person name="Ivanova N."/>
            <person name="Tomasz A."/>
            <person name="Richardson P."/>
        </authorList>
    </citation>
    <scope>NUCLEOTIDE SEQUENCE [LARGE SCALE GENOMIC DNA]</scope>
    <source>
        <strain>JH1</strain>
    </source>
</reference>
<evidence type="ECO:0000255" key="1">
    <source>
        <dbReference type="HAMAP-Rule" id="MF_01337"/>
    </source>
</evidence>
<evidence type="ECO:0000305" key="2"/>
<name>RL18_STAA2</name>
<organism>
    <name type="scientific">Staphylococcus aureus (strain JH1)</name>
    <dbReference type="NCBI Taxonomy" id="359787"/>
    <lineage>
        <taxon>Bacteria</taxon>
        <taxon>Bacillati</taxon>
        <taxon>Bacillota</taxon>
        <taxon>Bacilli</taxon>
        <taxon>Bacillales</taxon>
        <taxon>Staphylococcaceae</taxon>
        <taxon>Staphylococcus</taxon>
    </lineage>
</organism>
<keyword id="KW-0687">Ribonucleoprotein</keyword>
<keyword id="KW-0689">Ribosomal protein</keyword>
<keyword id="KW-0694">RNA-binding</keyword>
<keyword id="KW-0699">rRNA-binding</keyword>
<comment type="function">
    <text evidence="1">This is one of the proteins that bind and probably mediate the attachment of the 5S RNA into the large ribosomal subunit, where it forms part of the central protuberance.</text>
</comment>
<comment type="subunit">
    <text evidence="1">Part of the 50S ribosomal subunit; part of the 5S rRNA/L5/L18/L25 subcomplex. Contacts the 5S and 23S rRNAs.</text>
</comment>
<comment type="similarity">
    <text evidence="1">Belongs to the universal ribosomal protein uL18 family.</text>
</comment>
<dbReference type="EMBL" id="CP000736">
    <property type="protein sequence ID" value="ABR53127.1"/>
    <property type="molecule type" value="Genomic_DNA"/>
</dbReference>
<dbReference type="SMR" id="A6U3V9"/>
<dbReference type="KEGG" id="sah:SaurJH1_2302"/>
<dbReference type="HOGENOM" id="CLU_098841_0_1_9"/>
<dbReference type="GO" id="GO:0022625">
    <property type="term" value="C:cytosolic large ribosomal subunit"/>
    <property type="evidence" value="ECO:0007669"/>
    <property type="project" value="TreeGrafter"/>
</dbReference>
<dbReference type="GO" id="GO:0008097">
    <property type="term" value="F:5S rRNA binding"/>
    <property type="evidence" value="ECO:0007669"/>
    <property type="project" value="TreeGrafter"/>
</dbReference>
<dbReference type="GO" id="GO:0003735">
    <property type="term" value="F:structural constituent of ribosome"/>
    <property type="evidence" value="ECO:0007669"/>
    <property type="project" value="InterPro"/>
</dbReference>
<dbReference type="GO" id="GO:0006412">
    <property type="term" value="P:translation"/>
    <property type="evidence" value="ECO:0007669"/>
    <property type="project" value="UniProtKB-UniRule"/>
</dbReference>
<dbReference type="CDD" id="cd00432">
    <property type="entry name" value="Ribosomal_L18_L5e"/>
    <property type="match status" value="1"/>
</dbReference>
<dbReference type="FunFam" id="3.30.420.100:FF:000001">
    <property type="entry name" value="50S ribosomal protein L18"/>
    <property type="match status" value="1"/>
</dbReference>
<dbReference type="Gene3D" id="3.30.420.100">
    <property type="match status" value="1"/>
</dbReference>
<dbReference type="HAMAP" id="MF_01337_B">
    <property type="entry name" value="Ribosomal_uL18_B"/>
    <property type="match status" value="1"/>
</dbReference>
<dbReference type="InterPro" id="IPR004389">
    <property type="entry name" value="Ribosomal_uL18_bac-type"/>
</dbReference>
<dbReference type="InterPro" id="IPR005484">
    <property type="entry name" value="Ribosomal_uL18_bac/euk"/>
</dbReference>
<dbReference type="NCBIfam" id="TIGR00060">
    <property type="entry name" value="L18_bact"/>
    <property type="match status" value="1"/>
</dbReference>
<dbReference type="PANTHER" id="PTHR12899">
    <property type="entry name" value="39S RIBOSOMAL PROTEIN L18, MITOCHONDRIAL"/>
    <property type="match status" value="1"/>
</dbReference>
<dbReference type="PANTHER" id="PTHR12899:SF3">
    <property type="entry name" value="LARGE RIBOSOMAL SUBUNIT PROTEIN UL18M"/>
    <property type="match status" value="1"/>
</dbReference>
<dbReference type="Pfam" id="PF00861">
    <property type="entry name" value="Ribosomal_L18p"/>
    <property type="match status" value="1"/>
</dbReference>
<dbReference type="SUPFAM" id="SSF53137">
    <property type="entry name" value="Translational machinery components"/>
    <property type="match status" value="1"/>
</dbReference>
<proteinExistence type="inferred from homology"/>